<sequence length="324" mass="35554">MSASSQSRPTTIACLLGPTASGKTAAALALAARRPIEIVSVDSALVYRDMDIGTAKPSREERASVPHHLIDIIDPADAYSAAEFRADTLRLIGEIVARGRTPLLAGGTMLYYKALTQGLNDLPGADPEVRAALDADAARDGWPALHARLAQVDPDTAARLAPNDSQRIQRALEIFMLSGQPMSALLAAPRRTDDAAAAYRFVPVALEPSDRAVLHTRIAQRFDAMLDAGFIDEVERLRRRDDLHPDLPSMRCVGYRQAWEYLDGDTDYRTMRDKGIFATRQLCKRQITWLRAMPERIVVDCIAPDATARALDALERVLDGRTPD</sequence>
<dbReference type="EC" id="2.5.1.75" evidence="1"/>
<dbReference type="EMBL" id="CP000378">
    <property type="protein sequence ID" value="ABF75194.1"/>
    <property type="molecule type" value="Genomic_DNA"/>
</dbReference>
<dbReference type="SMR" id="Q1BYW1"/>
<dbReference type="HOGENOM" id="CLU_032616_0_0_4"/>
<dbReference type="GO" id="GO:0005524">
    <property type="term" value="F:ATP binding"/>
    <property type="evidence" value="ECO:0007669"/>
    <property type="project" value="UniProtKB-UniRule"/>
</dbReference>
<dbReference type="GO" id="GO:0052381">
    <property type="term" value="F:tRNA dimethylallyltransferase activity"/>
    <property type="evidence" value="ECO:0007669"/>
    <property type="project" value="UniProtKB-UniRule"/>
</dbReference>
<dbReference type="GO" id="GO:0006400">
    <property type="term" value="P:tRNA modification"/>
    <property type="evidence" value="ECO:0007669"/>
    <property type="project" value="TreeGrafter"/>
</dbReference>
<dbReference type="FunFam" id="1.10.20.140:FF:000001">
    <property type="entry name" value="tRNA dimethylallyltransferase"/>
    <property type="match status" value="1"/>
</dbReference>
<dbReference type="Gene3D" id="1.10.20.140">
    <property type="match status" value="1"/>
</dbReference>
<dbReference type="Gene3D" id="3.40.50.300">
    <property type="entry name" value="P-loop containing nucleotide triphosphate hydrolases"/>
    <property type="match status" value="1"/>
</dbReference>
<dbReference type="HAMAP" id="MF_00185">
    <property type="entry name" value="IPP_trans"/>
    <property type="match status" value="1"/>
</dbReference>
<dbReference type="InterPro" id="IPR039657">
    <property type="entry name" value="Dimethylallyltransferase"/>
</dbReference>
<dbReference type="InterPro" id="IPR018022">
    <property type="entry name" value="IPT"/>
</dbReference>
<dbReference type="InterPro" id="IPR027417">
    <property type="entry name" value="P-loop_NTPase"/>
</dbReference>
<dbReference type="NCBIfam" id="TIGR00174">
    <property type="entry name" value="miaA"/>
    <property type="match status" value="1"/>
</dbReference>
<dbReference type="PANTHER" id="PTHR11088">
    <property type="entry name" value="TRNA DIMETHYLALLYLTRANSFERASE"/>
    <property type="match status" value="1"/>
</dbReference>
<dbReference type="PANTHER" id="PTHR11088:SF60">
    <property type="entry name" value="TRNA DIMETHYLALLYLTRANSFERASE"/>
    <property type="match status" value="1"/>
</dbReference>
<dbReference type="Pfam" id="PF01715">
    <property type="entry name" value="IPPT"/>
    <property type="match status" value="1"/>
</dbReference>
<dbReference type="SUPFAM" id="SSF52540">
    <property type="entry name" value="P-loop containing nucleoside triphosphate hydrolases"/>
    <property type="match status" value="1"/>
</dbReference>
<accession>Q1BYW1</accession>
<protein>
    <recommendedName>
        <fullName evidence="1">tRNA dimethylallyltransferase</fullName>
        <ecNumber evidence="1">2.5.1.75</ecNumber>
    </recommendedName>
    <alternativeName>
        <fullName evidence="1">Dimethylallyl diphosphate:tRNA dimethylallyltransferase</fullName>
        <shortName evidence="1">DMAPP:tRNA dimethylallyltransferase</shortName>
        <shortName evidence="1">DMATase</shortName>
    </alternativeName>
    <alternativeName>
        <fullName evidence="1">Isopentenyl-diphosphate:tRNA isopentenyltransferase</fullName>
        <shortName evidence="1">IPP transferase</shortName>
        <shortName evidence="1">IPPT</shortName>
        <shortName evidence="1">IPTase</shortName>
    </alternativeName>
</protein>
<organism>
    <name type="scientific">Burkholderia orbicola (strain AU 1054)</name>
    <dbReference type="NCBI Taxonomy" id="331271"/>
    <lineage>
        <taxon>Bacteria</taxon>
        <taxon>Pseudomonadati</taxon>
        <taxon>Pseudomonadota</taxon>
        <taxon>Betaproteobacteria</taxon>
        <taxon>Burkholderiales</taxon>
        <taxon>Burkholderiaceae</taxon>
        <taxon>Burkholderia</taxon>
        <taxon>Burkholderia cepacia complex</taxon>
        <taxon>Burkholderia orbicola</taxon>
    </lineage>
</organism>
<proteinExistence type="inferred from homology"/>
<comment type="function">
    <text evidence="1">Catalyzes the transfer of a dimethylallyl group onto the adenine at position 37 in tRNAs that read codons beginning with uridine, leading to the formation of N6-(dimethylallyl)adenosine (i(6)A).</text>
</comment>
<comment type="catalytic activity">
    <reaction evidence="1">
        <text>adenosine(37) in tRNA + dimethylallyl diphosphate = N(6)-dimethylallyladenosine(37) in tRNA + diphosphate</text>
        <dbReference type="Rhea" id="RHEA:26482"/>
        <dbReference type="Rhea" id="RHEA-COMP:10162"/>
        <dbReference type="Rhea" id="RHEA-COMP:10375"/>
        <dbReference type="ChEBI" id="CHEBI:33019"/>
        <dbReference type="ChEBI" id="CHEBI:57623"/>
        <dbReference type="ChEBI" id="CHEBI:74411"/>
        <dbReference type="ChEBI" id="CHEBI:74415"/>
        <dbReference type="EC" id="2.5.1.75"/>
    </reaction>
</comment>
<comment type="cofactor">
    <cofactor evidence="1">
        <name>Mg(2+)</name>
        <dbReference type="ChEBI" id="CHEBI:18420"/>
    </cofactor>
</comment>
<comment type="subunit">
    <text evidence="1">Monomer.</text>
</comment>
<comment type="similarity">
    <text evidence="1">Belongs to the IPP transferase family.</text>
</comment>
<feature type="chain" id="PRO_1000020570" description="tRNA dimethylallyltransferase">
    <location>
        <begin position="1"/>
        <end position="324"/>
    </location>
</feature>
<feature type="region of interest" description="Interaction with substrate tRNA" evidence="1">
    <location>
        <begin position="42"/>
        <end position="45"/>
    </location>
</feature>
<feature type="region of interest" description="Interaction with substrate tRNA" evidence="1">
    <location>
        <begin position="166"/>
        <end position="170"/>
    </location>
</feature>
<feature type="region of interest" description="Interaction with substrate tRNA" evidence="1">
    <location>
        <begin position="251"/>
        <end position="256"/>
    </location>
</feature>
<feature type="region of interest" description="Interaction with substrate tRNA" evidence="1">
    <location>
        <begin position="284"/>
        <end position="291"/>
    </location>
</feature>
<feature type="binding site" evidence="1">
    <location>
        <begin position="17"/>
        <end position="24"/>
    </location>
    <ligand>
        <name>ATP</name>
        <dbReference type="ChEBI" id="CHEBI:30616"/>
    </ligand>
</feature>
<feature type="binding site" evidence="1">
    <location>
        <begin position="19"/>
        <end position="24"/>
    </location>
    <ligand>
        <name>substrate</name>
    </ligand>
</feature>
<feature type="site" description="Interaction with substrate tRNA" evidence="1">
    <location>
        <position position="108"/>
    </location>
</feature>
<feature type="site" description="Interaction with substrate tRNA" evidence="1">
    <location>
        <position position="130"/>
    </location>
</feature>
<name>MIAA_BURO1</name>
<keyword id="KW-0067">ATP-binding</keyword>
<keyword id="KW-0460">Magnesium</keyword>
<keyword id="KW-0547">Nucleotide-binding</keyword>
<keyword id="KW-0808">Transferase</keyword>
<keyword id="KW-0819">tRNA processing</keyword>
<gene>
    <name evidence="1" type="primary">miaA</name>
    <name type="ordered locus">Bcen_0280</name>
</gene>
<reference key="1">
    <citation type="submission" date="2006-05" db="EMBL/GenBank/DDBJ databases">
        <title>Complete sequence of chromosome 1 of Burkholderia cenocepacia AU 1054.</title>
        <authorList>
            <consortium name="US DOE Joint Genome Institute"/>
            <person name="Copeland A."/>
            <person name="Lucas S."/>
            <person name="Lapidus A."/>
            <person name="Barry K."/>
            <person name="Detter J.C."/>
            <person name="Glavina del Rio T."/>
            <person name="Hammon N."/>
            <person name="Israni S."/>
            <person name="Dalin E."/>
            <person name="Tice H."/>
            <person name="Pitluck S."/>
            <person name="Chain P."/>
            <person name="Malfatti S."/>
            <person name="Shin M."/>
            <person name="Vergez L."/>
            <person name="Schmutz J."/>
            <person name="Larimer F."/>
            <person name="Land M."/>
            <person name="Hauser L."/>
            <person name="Kyrpides N."/>
            <person name="Lykidis A."/>
            <person name="LiPuma J.J."/>
            <person name="Konstantinidis K."/>
            <person name="Tiedje J.M."/>
            <person name="Richardson P."/>
        </authorList>
    </citation>
    <scope>NUCLEOTIDE SEQUENCE [LARGE SCALE GENOMIC DNA]</scope>
    <source>
        <strain>AU 1054</strain>
    </source>
</reference>
<evidence type="ECO:0000255" key="1">
    <source>
        <dbReference type="HAMAP-Rule" id="MF_00185"/>
    </source>
</evidence>